<comment type="function">
    <text>Plays an important role in the elongation step of protein synthesis.</text>
</comment>
<comment type="subunit">
    <text>P1 and P2 exist as dimers at the large ribosomal subunit.</text>
</comment>
<comment type="allergen">
    <text evidence="3">Causes an allergic reaction in human.</text>
</comment>
<comment type="similarity">
    <text evidence="4">Belongs to the eukaryotic ribosomal protein P1/P2 family.</text>
</comment>
<organism>
    <name type="scientific">Alternaria alternata</name>
    <name type="common">Alternaria rot fungus</name>
    <name type="synonym">Torula alternata</name>
    <dbReference type="NCBI Taxonomy" id="5599"/>
    <lineage>
        <taxon>Eukaryota</taxon>
        <taxon>Fungi</taxon>
        <taxon>Dikarya</taxon>
        <taxon>Ascomycota</taxon>
        <taxon>Pezizomycotina</taxon>
        <taxon>Dothideomycetes</taxon>
        <taxon>Pleosporomycetidae</taxon>
        <taxon>Pleosporales</taxon>
        <taxon>Pleosporineae</taxon>
        <taxon>Pleosporaceae</taxon>
        <taxon>Alternaria</taxon>
        <taxon>Alternaria sect. Alternaria</taxon>
        <taxon>Alternaria alternata complex</taxon>
    </lineage>
</organism>
<evidence type="ECO:0000250" key="1"/>
<evidence type="ECO:0000256" key="2">
    <source>
        <dbReference type="SAM" id="MobiDB-lite"/>
    </source>
</evidence>
<evidence type="ECO:0000269" key="3">
    <source>
    </source>
</evidence>
<evidence type="ECO:0000305" key="4"/>
<keyword id="KW-0020">Allergen</keyword>
<keyword id="KW-0597">Phosphoprotein</keyword>
<keyword id="KW-0687">Ribonucleoprotein</keyword>
<keyword id="KW-0689">Ribosomal protein</keyword>
<feature type="chain" id="PRO_0000157672" description="Large ribosomal subunit protein P2">
    <location>
        <begin position="1"/>
        <end position="113"/>
    </location>
</feature>
<feature type="region of interest" description="Disordered" evidence="2">
    <location>
        <begin position="62"/>
        <end position="113"/>
    </location>
</feature>
<feature type="compositionally biased region" description="Low complexity" evidence="2">
    <location>
        <begin position="76"/>
        <end position="93"/>
    </location>
</feature>
<feature type="modified residue" description="Phosphoserine" evidence="1">
    <location>
        <position position="103"/>
    </location>
</feature>
<feature type="sequence conflict" description="In Ref. 2; AAB48041." evidence="4" ref="2">
    <original>S</original>
    <variation>P</variation>
    <location>
        <position position="59"/>
    </location>
</feature>
<feature type="sequence conflict" description="In Ref. 2; AAB48041." evidence="4" ref="2">
    <original>Q</original>
    <variation>E</variation>
    <location>
        <position position="87"/>
    </location>
</feature>
<reference key="1">
    <citation type="journal article" date="1995" name="Mol. Immunol.">
        <title>Molecular cloning of major and minor allergens of Alternaria alternata and Cladosporium herbarum.</title>
        <authorList>
            <person name="Achatz G."/>
            <person name="Oberkofler H."/>
            <person name="Lechenauer E."/>
            <person name="Simon-Nobbe B."/>
            <person name="Unger A."/>
            <person name="Kandler D."/>
            <person name="Ebner C."/>
            <person name="Prillinger H."/>
            <person name="Kraft D."/>
            <person name="Breitenbach M."/>
        </authorList>
    </citation>
    <scope>NUCLEOTIDE SEQUENCE [MRNA]</scope>
    <scope>ALLERGEN</scope>
    <source>
        <strain>08-0203-Berlin</strain>
    </source>
</reference>
<reference key="2">
    <citation type="journal article" date="1998" name="Int. Arch. Allergy Immunol.">
        <title>Molecular cloning of IgE-binding fragments of Alternaria alternata allergens.</title>
        <authorList>
            <person name="De Vouge M.W."/>
            <person name="Thaker A.J."/>
            <person name="Zhang L."/>
            <person name="Muradia G."/>
            <person name="Rode H."/>
            <person name="Vijay H.M."/>
        </authorList>
    </citation>
    <scope>NUCLEOTIDE SEQUENCE [MRNA]</scope>
</reference>
<name>RLA2_ALTAL</name>
<proteinExistence type="evidence at protein level"/>
<accession>P42037</accession>
<accession>P78982</accession>
<dbReference type="EMBL" id="X78222">
    <property type="protein sequence ID" value="CAA55066.1"/>
    <property type="molecule type" value="mRNA"/>
</dbReference>
<dbReference type="EMBL" id="U87806">
    <property type="protein sequence ID" value="AAB48041.1"/>
    <property type="molecule type" value="mRNA"/>
</dbReference>
<dbReference type="PIR" id="S43109">
    <property type="entry name" value="S43109"/>
</dbReference>
<dbReference type="SMR" id="P42037"/>
<dbReference type="Allergome" id="20">
    <property type="allergen name" value="Alt a 5"/>
</dbReference>
<dbReference type="Allergome" id="3062">
    <property type="allergen name" value="Alt a 5.0101"/>
</dbReference>
<dbReference type="VEuPathDB" id="FungiDB:CC77DRAFT_945373"/>
<dbReference type="GO" id="GO:0022625">
    <property type="term" value="C:cytosolic large ribosomal subunit"/>
    <property type="evidence" value="ECO:0007669"/>
    <property type="project" value="InterPro"/>
</dbReference>
<dbReference type="GO" id="GO:0003735">
    <property type="term" value="F:structural constituent of ribosome"/>
    <property type="evidence" value="ECO:0007669"/>
    <property type="project" value="InterPro"/>
</dbReference>
<dbReference type="GO" id="GO:0002182">
    <property type="term" value="P:cytoplasmic translational elongation"/>
    <property type="evidence" value="ECO:0007669"/>
    <property type="project" value="InterPro"/>
</dbReference>
<dbReference type="CDD" id="cd05833">
    <property type="entry name" value="Ribosomal_P2"/>
    <property type="match status" value="1"/>
</dbReference>
<dbReference type="FunFam" id="1.10.10.1410:FF:000002">
    <property type="entry name" value="60S acidic ribosomal protein P2"/>
    <property type="match status" value="1"/>
</dbReference>
<dbReference type="Gene3D" id="1.10.10.1410">
    <property type="match status" value="1"/>
</dbReference>
<dbReference type="HAMAP" id="MF_01478">
    <property type="entry name" value="Ribosomal_L12_arch"/>
    <property type="match status" value="1"/>
</dbReference>
<dbReference type="InterPro" id="IPR038716">
    <property type="entry name" value="P1/P2_N_sf"/>
</dbReference>
<dbReference type="InterPro" id="IPR027534">
    <property type="entry name" value="Ribosomal_P1/P2"/>
</dbReference>
<dbReference type="InterPro" id="IPR044076">
    <property type="entry name" value="Ribosomal_P2"/>
</dbReference>
<dbReference type="PANTHER" id="PTHR21141">
    <property type="entry name" value="60S ACIDIC RIBOSOMAL PROTEIN FAMILY MEMBER"/>
    <property type="match status" value="1"/>
</dbReference>
<dbReference type="PANTHER" id="PTHR21141:SF5">
    <property type="entry name" value="LARGE RIBOSOMAL SUBUNIT PROTEIN P2"/>
    <property type="match status" value="1"/>
</dbReference>
<dbReference type="Pfam" id="PF00428">
    <property type="entry name" value="Ribosomal_60s"/>
    <property type="match status" value="1"/>
</dbReference>
<protein>
    <recommendedName>
        <fullName evidence="4">Large ribosomal subunit protein P2</fullName>
    </recommendedName>
    <alternativeName>
        <fullName>60S acidic ribosomal protein P2</fullName>
    </alternativeName>
    <alternativeName>
        <fullName>Allergen Alt a 6</fullName>
    </alternativeName>
    <alternativeName>
        <fullName>Allergen Alt a VI</fullName>
    </alternativeName>
    <alternativeName>
        <fullName>Minor allergen Alt a 5</fullName>
    </alternativeName>
    <allergenName>Alt a 5</allergenName>
</protein>
<gene>
    <name type="primary">ALTA5</name>
    <name type="synonym">ALTA6</name>
</gene>
<sequence length="113" mass="11134">MKHLAAYLLLGLGGNTSPSAADVKAVLESVGIEADSDRLDKLISELEGKDINELIASGSEKLASVPSGGAGGAAASGGAAAAGGSAQAEAAPEAAKEEEKEESDEDMGFGLFD</sequence>